<organism>
    <name type="scientific">Mus musculus</name>
    <name type="common">Mouse</name>
    <dbReference type="NCBI Taxonomy" id="10090"/>
    <lineage>
        <taxon>Eukaryota</taxon>
        <taxon>Metazoa</taxon>
        <taxon>Chordata</taxon>
        <taxon>Craniata</taxon>
        <taxon>Vertebrata</taxon>
        <taxon>Euteleostomi</taxon>
        <taxon>Mammalia</taxon>
        <taxon>Eutheria</taxon>
        <taxon>Euarchontoglires</taxon>
        <taxon>Glires</taxon>
        <taxon>Rodentia</taxon>
        <taxon>Myomorpha</taxon>
        <taxon>Muroidea</taxon>
        <taxon>Muridae</taxon>
        <taxon>Murinae</taxon>
        <taxon>Mus</taxon>
        <taxon>Mus</taxon>
    </lineage>
</organism>
<reference key="1">
    <citation type="journal article" date="1996" name="Proc. Natl. Acad. Sci. U.S.A.">
        <title>Cloning and characterization of KAP3: a novel kinesin superfamily-associated protein of KIF3A/3B.</title>
        <authorList>
            <person name="Yamazaki H."/>
            <person name="Nakata T."/>
            <person name="Okada Y."/>
            <person name="Hirokawa N."/>
        </authorList>
    </citation>
    <scope>NUCLEOTIDE SEQUENCE [MRNA]</scope>
    <scope>PROTEIN SEQUENCE OF 86-106; 150-185 AND 486-498</scope>
    <scope>ALTERNATIVE SPLICING</scope>
    <source>
        <strain>ICR</strain>
        <tissue>Brain</tissue>
    </source>
</reference>
<reference key="2">
    <citation type="journal article" date="2004" name="Genome Res.">
        <title>The status, quality, and expansion of the NIH full-length cDNA project: the Mammalian Gene Collection (MGC).</title>
        <authorList>
            <consortium name="The MGC Project Team"/>
        </authorList>
    </citation>
    <scope>NUCLEOTIDE SEQUENCE [LARGE SCALE MRNA] (ISOFORMS KAP3A AND KAP3B)</scope>
    <source>
        <strain>C57BL/6J</strain>
        <tissue>Brain</tissue>
        <tissue>Eye</tissue>
    </source>
</reference>
<reference key="3">
    <citation type="journal article" date="2010" name="Cell">
        <title>A tissue-specific atlas of mouse protein phosphorylation and expression.</title>
        <authorList>
            <person name="Huttlin E.L."/>
            <person name="Jedrychowski M.P."/>
            <person name="Elias J.E."/>
            <person name="Goswami T."/>
            <person name="Rad R."/>
            <person name="Beausoleil S.A."/>
            <person name="Villen J."/>
            <person name="Haas W."/>
            <person name="Sowa M.E."/>
            <person name="Gygi S.P."/>
        </authorList>
    </citation>
    <scope>PHOSPHORYLATION [LARGE SCALE ANALYSIS] AT SER-60</scope>
    <scope>IDENTIFICATION BY MASS SPECTROMETRY [LARGE SCALE ANALYSIS]</scope>
    <source>
        <tissue>Brain</tissue>
        <tissue>Brown adipose tissue</tissue>
        <tissue>Kidney</tissue>
        <tissue>Lung</tissue>
        <tissue>Pancreas</tissue>
        <tissue>Spleen</tissue>
        <tissue>Testis</tissue>
    </source>
</reference>
<dbReference type="EMBL" id="D50366">
    <property type="protein sequence ID" value="BAA08901.1"/>
    <property type="molecule type" value="mRNA"/>
</dbReference>
<dbReference type="EMBL" id="D50367">
    <property type="protein sequence ID" value="BAA08902.1"/>
    <property type="molecule type" value="mRNA"/>
</dbReference>
<dbReference type="EMBL" id="BC040362">
    <property type="protein sequence ID" value="AAH40362.1"/>
    <property type="molecule type" value="mRNA"/>
</dbReference>
<dbReference type="EMBL" id="BC049100">
    <property type="protein sequence ID" value="AAH49100.1"/>
    <property type="molecule type" value="mRNA"/>
</dbReference>
<dbReference type="CCDS" id="CCDS35751.1">
    <molecule id="P70188-2"/>
</dbReference>
<dbReference type="CCDS" id="CCDS78729.1">
    <molecule id="P70188-1"/>
</dbReference>
<dbReference type="PIR" id="JC6161">
    <property type="entry name" value="JC6161"/>
</dbReference>
<dbReference type="RefSeq" id="NP_001292572.1">
    <molecule id="P70188-1"/>
    <property type="nucleotide sequence ID" value="NM_001305643.1"/>
</dbReference>
<dbReference type="RefSeq" id="NP_034759.1">
    <molecule id="P70188-2"/>
    <property type="nucleotide sequence ID" value="NM_010629.3"/>
</dbReference>
<dbReference type="SASBDB" id="P70188"/>
<dbReference type="SMR" id="P70188"/>
<dbReference type="BioGRID" id="200951">
    <property type="interactions" value="7"/>
</dbReference>
<dbReference type="ComplexPortal" id="CPX-3204">
    <property type="entry name" value="KIF3 complex variant AB-KAP3"/>
</dbReference>
<dbReference type="ComplexPortal" id="CPX-3205">
    <property type="entry name" value="KIF3 complex variant AC-KAP3"/>
</dbReference>
<dbReference type="CORUM" id="P70188"/>
<dbReference type="FunCoup" id="P70188">
    <property type="interactions" value="1633"/>
</dbReference>
<dbReference type="IntAct" id="P70188">
    <property type="interactions" value="8"/>
</dbReference>
<dbReference type="MINT" id="P70188"/>
<dbReference type="STRING" id="10090.ENSMUSP00000027877"/>
<dbReference type="GlyGen" id="P70188">
    <property type="glycosylation" value="1 site, 1 N-linked glycan (1 site)"/>
</dbReference>
<dbReference type="iPTMnet" id="P70188"/>
<dbReference type="PhosphoSitePlus" id="P70188"/>
<dbReference type="SwissPalm" id="P70188"/>
<dbReference type="jPOST" id="P70188"/>
<dbReference type="PaxDb" id="10090-ENSMUSP00000076830"/>
<dbReference type="PeptideAtlas" id="P70188"/>
<dbReference type="ProteomicsDB" id="269308">
    <molecule id="P70188-1"/>
</dbReference>
<dbReference type="ProteomicsDB" id="269309">
    <molecule id="P70188-2"/>
</dbReference>
<dbReference type="Pumba" id="P70188"/>
<dbReference type="Antibodypedia" id="20546">
    <property type="antibodies" value="181 antibodies from 26 providers"/>
</dbReference>
<dbReference type="DNASU" id="16579"/>
<dbReference type="Ensembl" id="ENSMUST00000027877.7">
    <molecule id="P70188-1"/>
    <property type="protein sequence ID" value="ENSMUSP00000027877.6"/>
    <property type="gene ID" value="ENSMUSG00000026585.14"/>
</dbReference>
<dbReference type="Ensembl" id="ENSMUST00000077642.12">
    <molecule id="P70188-2"/>
    <property type="protein sequence ID" value="ENSMUSP00000076830.6"/>
    <property type="gene ID" value="ENSMUSG00000026585.14"/>
</dbReference>
<dbReference type="GeneID" id="16579"/>
<dbReference type="KEGG" id="mmu:16579"/>
<dbReference type="UCSC" id="uc007dho.2">
    <molecule id="P70188-2"/>
    <property type="organism name" value="mouse"/>
</dbReference>
<dbReference type="UCSC" id="uc007dhp.2">
    <molecule id="P70188-1"/>
    <property type="organism name" value="mouse"/>
</dbReference>
<dbReference type="AGR" id="MGI:107566"/>
<dbReference type="CTD" id="22920"/>
<dbReference type="MGI" id="MGI:107566">
    <property type="gene designation" value="Kifap3"/>
</dbReference>
<dbReference type="VEuPathDB" id="HostDB:ENSMUSG00000026585"/>
<dbReference type="eggNOG" id="KOG1222">
    <property type="taxonomic scope" value="Eukaryota"/>
</dbReference>
<dbReference type="GeneTree" id="ENSGT00390000003574"/>
<dbReference type="HOGENOM" id="CLU_009879_1_0_1"/>
<dbReference type="InParanoid" id="P70188"/>
<dbReference type="OMA" id="MYELNIV"/>
<dbReference type="OrthoDB" id="10265679at2759"/>
<dbReference type="PhylomeDB" id="P70188"/>
<dbReference type="TreeFam" id="TF314964"/>
<dbReference type="Reactome" id="R-MMU-2132295">
    <property type="pathway name" value="MHC class II antigen presentation"/>
</dbReference>
<dbReference type="Reactome" id="R-MMU-5620924">
    <property type="pathway name" value="Intraflagellar transport"/>
</dbReference>
<dbReference type="Reactome" id="R-MMU-6811434">
    <property type="pathway name" value="COPI-dependent Golgi-to-ER retrograde traffic"/>
</dbReference>
<dbReference type="Reactome" id="R-MMU-983189">
    <property type="pathway name" value="Kinesins"/>
</dbReference>
<dbReference type="BioGRID-ORCS" id="16579">
    <property type="hits" value="3 hits in 62 CRISPR screens"/>
</dbReference>
<dbReference type="ChiTaRS" id="Kifap3">
    <property type="organism name" value="mouse"/>
</dbReference>
<dbReference type="PRO" id="PR:P70188"/>
<dbReference type="Proteomes" id="UP000000589">
    <property type="component" value="Chromosome 1"/>
</dbReference>
<dbReference type="RNAct" id="P70188">
    <property type="molecule type" value="protein"/>
</dbReference>
<dbReference type="Bgee" id="ENSMUSG00000026585">
    <property type="expression patterns" value="Expressed in barrel cortex and 260 other cell types or tissues"/>
</dbReference>
<dbReference type="GO" id="GO:0005930">
    <property type="term" value="C:axoneme"/>
    <property type="evidence" value="ECO:0000314"/>
    <property type="project" value="MGI"/>
</dbReference>
<dbReference type="GO" id="GO:0005813">
    <property type="term" value="C:centrosome"/>
    <property type="evidence" value="ECO:0007669"/>
    <property type="project" value="Ensembl"/>
</dbReference>
<dbReference type="GO" id="GO:0036064">
    <property type="term" value="C:ciliary basal body"/>
    <property type="evidence" value="ECO:0000314"/>
    <property type="project" value="MGI"/>
</dbReference>
<dbReference type="GO" id="GO:0000794">
    <property type="term" value="C:condensed nuclear chromosome"/>
    <property type="evidence" value="ECO:0007669"/>
    <property type="project" value="Ensembl"/>
</dbReference>
<dbReference type="GO" id="GO:0005829">
    <property type="term" value="C:cytosol"/>
    <property type="evidence" value="ECO:0000304"/>
    <property type="project" value="Reactome"/>
</dbReference>
<dbReference type="GO" id="GO:0032839">
    <property type="term" value="C:dendrite cytoplasm"/>
    <property type="evidence" value="ECO:0007669"/>
    <property type="project" value="GOC"/>
</dbReference>
<dbReference type="GO" id="GO:0005783">
    <property type="term" value="C:endoplasmic reticulum"/>
    <property type="evidence" value="ECO:0000314"/>
    <property type="project" value="MGI"/>
</dbReference>
<dbReference type="GO" id="GO:0098978">
    <property type="term" value="C:glutamatergic synapse"/>
    <property type="evidence" value="ECO:0000314"/>
    <property type="project" value="SynGO"/>
</dbReference>
<dbReference type="GO" id="GO:0005794">
    <property type="term" value="C:Golgi apparatus"/>
    <property type="evidence" value="ECO:0000314"/>
    <property type="project" value="MGI"/>
</dbReference>
<dbReference type="GO" id="GO:0016939">
    <property type="term" value="C:kinesin II complex"/>
    <property type="evidence" value="ECO:0000314"/>
    <property type="project" value="MGI"/>
</dbReference>
<dbReference type="GO" id="GO:0015630">
    <property type="term" value="C:microtubule cytoskeleton"/>
    <property type="evidence" value="ECO:0000314"/>
    <property type="project" value="MGI"/>
</dbReference>
<dbReference type="GO" id="GO:1990075">
    <property type="term" value="C:periciliary membrane compartment"/>
    <property type="evidence" value="ECO:0000314"/>
    <property type="project" value="MGI"/>
</dbReference>
<dbReference type="GO" id="GO:0032391">
    <property type="term" value="C:photoreceptor connecting cilium"/>
    <property type="evidence" value="ECO:0000314"/>
    <property type="project" value="MGI"/>
</dbReference>
<dbReference type="GO" id="GO:0001917">
    <property type="term" value="C:photoreceptor inner segment"/>
    <property type="evidence" value="ECO:0000314"/>
    <property type="project" value="MGI"/>
</dbReference>
<dbReference type="GO" id="GO:0001750">
    <property type="term" value="C:photoreceptor outer segment"/>
    <property type="evidence" value="ECO:0000314"/>
    <property type="project" value="MGI"/>
</dbReference>
<dbReference type="GO" id="GO:0098794">
    <property type="term" value="C:postsynapse"/>
    <property type="evidence" value="ECO:0000314"/>
    <property type="project" value="SynGO"/>
</dbReference>
<dbReference type="GO" id="GO:0005876">
    <property type="term" value="C:spindle microtubule"/>
    <property type="evidence" value="ECO:0007669"/>
    <property type="project" value="Ensembl"/>
</dbReference>
<dbReference type="GO" id="GO:0120170">
    <property type="term" value="F:intraciliary transport particle B binding"/>
    <property type="evidence" value="ECO:0000314"/>
    <property type="project" value="MGI"/>
</dbReference>
<dbReference type="GO" id="GO:0019894">
    <property type="term" value="F:kinesin binding"/>
    <property type="evidence" value="ECO:0007669"/>
    <property type="project" value="Ensembl"/>
</dbReference>
<dbReference type="GO" id="GO:0019903">
    <property type="term" value="F:protein phosphatase binding"/>
    <property type="evidence" value="ECO:0007669"/>
    <property type="project" value="Ensembl"/>
</dbReference>
<dbReference type="GO" id="GO:0098971">
    <property type="term" value="P:anterograde dendritic transport of neurotransmitter receptor complex"/>
    <property type="evidence" value="ECO:0000314"/>
    <property type="project" value="SynGO"/>
</dbReference>
<dbReference type="GO" id="GO:0006915">
    <property type="term" value="P:apoptotic process"/>
    <property type="evidence" value="ECO:0000315"/>
    <property type="project" value="MGI"/>
</dbReference>
<dbReference type="GO" id="GO:0010659">
    <property type="term" value="P:cardiac muscle cell apoptotic process"/>
    <property type="evidence" value="ECO:0000315"/>
    <property type="project" value="MGI"/>
</dbReference>
<dbReference type="GO" id="GO:0008283">
    <property type="term" value="P:cell population proliferation"/>
    <property type="evidence" value="ECO:0000315"/>
    <property type="project" value="MGI"/>
</dbReference>
<dbReference type="GO" id="GO:0007017">
    <property type="term" value="P:microtubule-based process"/>
    <property type="evidence" value="ECO:0000353"/>
    <property type="project" value="UniProtKB"/>
</dbReference>
<dbReference type="GO" id="GO:0043066">
    <property type="term" value="P:negative regulation of apoptotic process"/>
    <property type="evidence" value="ECO:0000315"/>
    <property type="project" value="MGI"/>
</dbReference>
<dbReference type="GO" id="GO:0010667">
    <property type="term" value="P:negative regulation of cardiac muscle cell apoptotic process"/>
    <property type="evidence" value="ECO:0000315"/>
    <property type="project" value="MGI"/>
</dbReference>
<dbReference type="GO" id="GO:0007406">
    <property type="term" value="P:negative regulation of neuroblast proliferation"/>
    <property type="evidence" value="ECO:0000315"/>
    <property type="project" value="MGI"/>
</dbReference>
<dbReference type="GO" id="GO:0070244">
    <property type="term" value="P:negative regulation of thymocyte apoptotic process"/>
    <property type="evidence" value="ECO:0000315"/>
    <property type="project" value="MGI"/>
</dbReference>
<dbReference type="GO" id="GO:0007405">
    <property type="term" value="P:neuroblast proliferation"/>
    <property type="evidence" value="ECO:0000315"/>
    <property type="project" value="MGI"/>
</dbReference>
<dbReference type="GO" id="GO:0046587">
    <property type="term" value="P:positive regulation of calcium-dependent cell-cell adhesion"/>
    <property type="evidence" value="ECO:0000315"/>
    <property type="project" value="MGI"/>
</dbReference>
<dbReference type="GO" id="GO:0008104">
    <property type="term" value="P:protein localization"/>
    <property type="evidence" value="ECO:0000315"/>
    <property type="project" value="MGI"/>
</dbReference>
<dbReference type="GO" id="GO:0070242">
    <property type="term" value="P:thymocyte apoptotic process"/>
    <property type="evidence" value="ECO:0000315"/>
    <property type="project" value="MGI"/>
</dbReference>
<dbReference type="Gene3D" id="1.25.10.10">
    <property type="entry name" value="Leucine-rich Repeat Variant"/>
    <property type="match status" value="1"/>
</dbReference>
<dbReference type="InterPro" id="IPR011989">
    <property type="entry name" value="ARM-like"/>
</dbReference>
<dbReference type="InterPro" id="IPR016024">
    <property type="entry name" value="ARM-type_fold"/>
</dbReference>
<dbReference type="InterPro" id="IPR000225">
    <property type="entry name" value="Armadillo"/>
</dbReference>
<dbReference type="InterPro" id="IPR008658">
    <property type="entry name" value="KAP3"/>
</dbReference>
<dbReference type="PANTHER" id="PTHR15605:SF2">
    <property type="entry name" value="KINESIN-ASSOCIATED PROTEIN 3"/>
    <property type="match status" value="1"/>
</dbReference>
<dbReference type="PANTHER" id="PTHR15605">
    <property type="entry name" value="KINESIN-ASSOCIATED PROTEINS"/>
    <property type="match status" value="1"/>
</dbReference>
<dbReference type="Pfam" id="PF05804">
    <property type="entry name" value="KAP"/>
    <property type="match status" value="1"/>
</dbReference>
<dbReference type="SMART" id="SM00185">
    <property type="entry name" value="ARM"/>
    <property type="match status" value="3"/>
</dbReference>
<dbReference type="SMART" id="SM01297">
    <property type="entry name" value="KAP"/>
    <property type="match status" value="1"/>
</dbReference>
<dbReference type="SUPFAM" id="SSF48371">
    <property type="entry name" value="ARM repeat"/>
    <property type="match status" value="1"/>
</dbReference>
<dbReference type="PROSITE" id="PS50176">
    <property type="entry name" value="ARM_REPEAT"/>
    <property type="match status" value="1"/>
</dbReference>
<proteinExistence type="evidence at protein level"/>
<evidence type="ECO:0000250" key="1"/>
<evidence type="ECO:0000256" key="2">
    <source>
        <dbReference type="SAM" id="MobiDB-lite"/>
    </source>
</evidence>
<evidence type="ECO:0000303" key="3">
    <source>
    </source>
</evidence>
<evidence type="ECO:0007744" key="4">
    <source>
    </source>
</evidence>
<sequence>MQGEDARYLKRKVKGGNIDVHPSEKALIVQYEVEATILGEMGDPMLGERKECQKIIRLKSLNANTDITSLARKVVEECKLIHPSKLSEVEQLLYYLQNRRDSLPGKEKKEKSSKPKDPPPFEGMEIDEVANINDMDEYIELLYEDIPDKVRGSALILQLARNPDNLEELLLNETALGALARVLREDWKQSVELATNIIYIFFCFSSFSHFHGLITHYKIGALCMNIIDHELKRHELWQEELSKKKKAVDEDLENQTLRKDYDKTFKKYQGLVVKQEQLLRVALYLLLNLAEDTRTELKMRNKNIVHMLVKALDRDNFELLILVVSFLKKLSIFMENKNDMVEMDIVEKLVKMIPCEHEDLLNITLRLLLNLSFDTGLRNKMVQVGLLPKLTALLGNENYKQIAMCVLYHISMDDRFKSMFAYTDCIPQLMKMLFECSDERIDLELISFCINLAANKRNVQLICEGNGLKMLMKRALKLKDPLLMKMIRNISQHDGPTKNLFIDYVGDLAAQISSDEEEEFVIECLGTLANLTIPDLDWELVLKEYKLVPFLKDKLKPGAAEDDLVLEVVIMIGTVSMDDSCAALLAKSGIIPALIELLNAQQEDDEFVCQIIYVFYQMVFHQATRDVIIKETQAPAYLIDLMHDKNNEIRKVCDNTLDIIAEYDEEWAKKIQSEKFRWHNSQWLEMVESRQLDESEQYLYGDDRIEPYIHEGDILERPDLFYNSDGLITSEGAISPDFFNDFHLQNGDVVGQHAFPGSLGMDGFGQPLGILGRPATAYGFRPDEPYYYSFGSR</sequence>
<gene>
    <name type="primary">Kifap3</name>
</gene>
<feature type="chain" id="PRO_0000084303" description="Kinesin-associated protein 3">
    <location>
        <begin position="1"/>
        <end position="793"/>
    </location>
</feature>
<feature type="repeat" description="ARM 1">
    <location>
        <begin position="333"/>
        <end position="373"/>
    </location>
</feature>
<feature type="repeat" description="ARM 2">
    <location>
        <begin position="374"/>
        <end position="412"/>
    </location>
</feature>
<feature type="repeat" description="ARM 3">
    <location>
        <begin position="494"/>
        <end position="533"/>
    </location>
</feature>
<feature type="repeat" description="ARM 4">
    <location>
        <begin position="578"/>
        <end position="620"/>
    </location>
</feature>
<feature type="repeat" description="ARM 5">
    <location>
        <begin position="621"/>
        <end position="662"/>
    </location>
</feature>
<feature type="region of interest" description="Disordered" evidence="2">
    <location>
        <begin position="103"/>
        <end position="123"/>
    </location>
</feature>
<feature type="compositionally biased region" description="Basic and acidic residues" evidence="2">
    <location>
        <begin position="103"/>
        <end position="119"/>
    </location>
</feature>
<feature type="modified residue" description="Phosphoserine" evidence="4">
    <location>
        <position position="60"/>
    </location>
</feature>
<feature type="splice variant" id="VSP_003899" description="In isoform KAP3B." evidence="3">
    <original>LGMDGFGQPLGILGRPATAYGFRPDEPYYYSFGSR</original>
    <variation>TVHPRISKCFASVH</variation>
    <location>
        <begin position="759"/>
        <end position="793"/>
    </location>
</feature>
<protein>
    <recommendedName>
        <fullName>Kinesin-associated protein 3</fullName>
        <shortName>KAP-3</shortName>
        <shortName>KAP3</shortName>
    </recommendedName>
</protein>
<accession>P70188</accession>
<accession>P70189</accession>
<accession>Q6GTS3</accession>
<keyword id="KW-0025">Alternative splicing</keyword>
<keyword id="KW-0903">Direct protein sequencing</keyword>
<keyword id="KW-0597">Phosphoprotein</keyword>
<keyword id="KW-1185">Reference proteome</keyword>
<keyword id="KW-0677">Repeat</keyword>
<name>KIFA3_MOUSE</name>
<comment type="function">
    <text>Involved in tethering the chromosomes to the spindle pole and in chromosome movement. Binds to the tail domain of the KIF3A/KIF3B heterodimer to form a heterotrimeric KIF3 complex and may regulate the membrane binding of this complex.</text>
</comment>
<comment type="subunit">
    <text evidence="1">Interacts with SMC3 subunit of the cohesin complex (By similarity). Heterotrimer of KIFAP3, KIF3A and KIF3B. Interacts with RAP1GDS1/SMG GDS.</text>
</comment>
<comment type="interaction">
    <interactant intactId="EBI-6169443">
        <id>P70188</id>
    </interactant>
    <interactant intactId="EBI-6169413">
        <id>P28741</id>
        <label>Kif3a</label>
    </interactant>
    <organismsDiffer>false</organismsDiffer>
    <experiments>4</experiments>
</comment>
<comment type="alternative products">
    <event type="alternative splicing"/>
    <isoform>
        <id>P70188-1</id>
        <name>KAP3A</name>
        <sequence type="displayed"/>
    </isoform>
    <isoform>
        <id>P70188-2</id>
        <name>KAP3B</name>
        <sequence type="described" ref="VSP_003899"/>
    </isoform>
</comment>
<comment type="PTM">
    <text evidence="1">Phosphorylated on tyrosine residues by SRC in vitro; this reduces the binding affinity of the protein for RAP1GDS1.</text>
</comment>